<comment type="function">
    <text evidence="3">Hydrolyzes and transfers gamma-glutamyl moieties from glutathione and other gamma-glutamyl compounds to acceptors.</text>
</comment>
<comment type="catalytic activity">
    <reaction evidence="3">
        <text>an N-terminal (5-L-glutamyl)-[peptide] + an alpha-amino acid = 5-L-glutamyl amino acid + an N-terminal L-alpha-aminoacyl-[peptide]</text>
        <dbReference type="Rhea" id="RHEA:23904"/>
        <dbReference type="Rhea" id="RHEA-COMP:9780"/>
        <dbReference type="Rhea" id="RHEA-COMP:9795"/>
        <dbReference type="ChEBI" id="CHEBI:77644"/>
        <dbReference type="ChEBI" id="CHEBI:78597"/>
        <dbReference type="ChEBI" id="CHEBI:78599"/>
        <dbReference type="ChEBI" id="CHEBI:78608"/>
        <dbReference type="EC" id="2.3.2.2"/>
    </reaction>
    <physiologicalReaction direction="left-to-right" evidence="3">
        <dbReference type="Rhea" id="RHEA:23905"/>
    </physiologicalReaction>
</comment>
<comment type="catalytic activity">
    <reaction evidence="3">
        <text>glutathione + H2O = L-cysteinylglycine + L-glutamate</text>
        <dbReference type="Rhea" id="RHEA:28807"/>
        <dbReference type="ChEBI" id="CHEBI:15377"/>
        <dbReference type="ChEBI" id="CHEBI:29985"/>
        <dbReference type="ChEBI" id="CHEBI:57925"/>
        <dbReference type="ChEBI" id="CHEBI:61694"/>
        <dbReference type="EC" id="3.4.19.13"/>
    </reaction>
    <physiologicalReaction direction="left-to-right" evidence="3">
        <dbReference type="Rhea" id="RHEA:28808"/>
    </physiologicalReaction>
</comment>
<comment type="catalytic activity">
    <reaction evidence="3">
        <text>an S-substituted glutathione + H2O = an S-substituted L-cysteinylglycine + L-glutamate</text>
        <dbReference type="Rhea" id="RHEA:59468"/>
        <dbReference type="ChEBI" id="CHEBI:15377"/>
        <dbReference type="ChEBI" id="CHEBI:29985"/>
        <dbReference type="ChEBI" id="CHEBI:90779"/>
        <dbReference type="ChEBI" id="CHEBI:143103"/>
        <dbReference type="EC" id="3.4.19.13"/>
    </reaction>
    <physiologicalReaction direction="left-to-right" evidence="3">
        <dbReference type="Rhea" id="RHEA:59469"/>
    </physiologicalReaction>
</comment>
<comment type="pathway">
    <text evidence="3">Sulfur metabolism; glutathione metabolism.</text>
</comment>
<comment type="subunit">
    <text evidence="3">Heterodimer composed of the light and heavy chains. The active site is located in the light chain.</text>
</comment>
<comment type="subcellular location">
    <subcellularLocation>
        <location evidence="3">Membrane</location>
        <topology evidence="2">Single-pass type II membrane protein</topology>
    </subcellularLocation>
</comment>
<comment type="PTM">
    <text evidence="3">Cleaved by autocatalysis into a large and a small subunit and the autocatalytic cleavage is essential to the functional activation of the enzyme.</text>
</comment>
<comment type="similarity">
    <text evidence="7">Belongs to the gamma-glutamyltransferase family.</text>
</comment>
<comment type="sequence caution" evidence="7">
    <conflict type="erroneous initiation">
        <sequence resource="EMBL-CDS" id="AAK27971"/>
    </conflict>
    <text>Truncated N-terminus.</text>
</comment>
<reference key="1">
    <citation type="submission" date="2000-03" db="EMBL/GenBank/DDBJ databases">
        <title>Rattus norvegicus gamma-glutamyltranspeptidase homolog mRNA complete code.</title>
        <authorList>
            <person name="Yamaguchi T."/>
            <person name="Araki K."/>
            <person name="Nawa H."/>
        </authorList>
    </citation>
    <scope>NUCLEOTIDE SEQUENCE [MRNA] OF 3-662</scope>
</reference>
<reference key="2">
    <citation type="journal article" date="2012" name="Nat. Commun.">
        <title>Quantitative maps of protein phosphorylation sites across 14 different rat organs and tissues.</title>
        <authorList>
            <person name="Lundby A."/>
            <person name="Secher A."/>
            <person name="Lage K."/>
            <person name="Nordsborg N.B."/>
            <person name="Dmytriyev A."/>
            <person name="Lundby C."/>
            <person name="Olsen J.V."/>
        </authorList>
    </citation>
    <scope>PHOSPHORYLATION [LARGE SCALE ANALYSIS] AT SER-17; SER-79 AND SER-83</scope>
    <scope>IDENTIFICATION BY MASS SPECTROMETRY [LARGE SCALE ANALYSIS]</scope>
</reference>
<reference key="3">
    <citation type="journal article" date="2013" name="J. Proteome Res.">
        <title>Site-specific glycan-peptide analysis for determination of N-glycoproteome heterogeneity.</title>
        <authorList>
            <person name="Parker B.L."/>
            <person name="Thaysen-Andersen M."/>
            <person name="Solis N."/>
            <person name="Scott N.E."/>
            <person name="Larsen M.R."/>
            <person name="Graham M.E."/>
            <person name="Packer N.H."/>
            <person name="Cordwell S.J."/>
        </authorList>
    </citation>
    <scope>GLYCOSYLATION [LARGE SCALE ANALYSIS] AT ASN-523 AND ASN-586</scope>
    <scope>IDENTIFICATION BY MASS SPECTROMETRY [LARGE SCALE ANALYSIS]</scope>
    <source>
        <tissue>Brain</tissue>
    </source>
</reference>
<keyword id="KW-0012">Acyltransferase</keyword>
<keyword id="KW-0317">Glutathione biosynthesis</keyword>
<keyword id="KW-0325">Glycoprotein</keyword>
<keyword id="KW-0378">Hydrolase</keyword>
<keyword id="KW-0472">Membrane</keyword>
<keyword id="KW-0597">Phosphoprotein</keyword>
<keyword id="KW-1185">Reference proteome</keyword>
<keyword id="KW-0735">Signal-anchor</keyword>
<keyword id="KW-0808">Transferase</keyword>
<keyword id="KW-0812">Transmembrane</keyword>
<keyword id="KW-1133">Transmembrane helix</keyword>
<keyword id="KW-0865">Zymogen</keyword>
<sequence length="662" mass="70383">MAAENEASQESALGAYSPVDYMSITSFPRLPEDEPAPAAPLRGRKDEDAFLGDPDTDPDSFLKSARLQRLPSSSSEMGSQDGSPLRETRKDPFSAAAAECSCRQDGLTVIVTACLTFATGVTVALVMQIYFGDPQIFQQGAVVTDASCCTALGMEVLSKQGSSVDAAVAAALCLGIVAPHSSGLGGGGVMLVHDIRRNESHLIDFRESAPGALREEALQRSWDTKPGLLVGVPGMVKGLYEAHQLYGRLPWSQVLAFAAAVAQDGFNVTHDLAHALAEQLPPNASDRFLETFLPLGHPPLPGSLLRRPDLAEVLDILGISGPAAFYNGGNLTLEMVAEVQHAGGVMTEEDFSNYSALTEKPVCGVYRGHLVLSPPPPHTGPALISALNILEGFNLTSLVSREQALHWVAETLKIALALASRLGDPVYDSTISESMDDMLSKVEAANFRGHISDSQAAPAPLLPVYELDGAPTAAQVLVMGPDDFIVAMVSSLNRPFGSGLLTPSGILLNSQMLDFSWPNRTANHSAPSLENSVQPGKRPLSFLLPTVVRPAEGLCGTYLALGANGAARGLSGLTQVLLNVLTLNRNLSDSLARGRLHPDLQSNVLQVDSEFTEEEIEFLEARGHHVEKVDVLSWVHGSRRTNNFIIGVKDPRSLDATGASIL</sequence>
<dbReference type="EC" id="3.4.19.13" evidence="3"/>
<dbReference type="EC" id="2.3.2.2" evidence="3"/>
<dbReference type="EMBL" id="AF244973">
    <property type="protein sequence ID" value="AAK27971.1"/>
    <property type="status" value="ALT_INIT"/>
    <property type="molecule type" value="mRNA"/>
</dbReference>
<dbReference type="PIR" id="JC7331">
    <property type="entry name" value="JC7331"/>
</dbReference>
<dbReference type="RefSeq" id="NP_569107.2">
    <property type="nucleotide sequence ID" value="NM_130423.2"/>
</dbReference>
<dbReference type="RefSeq" id="XP_038960086.1">
    <property type="nucleotide sequence ID" value="XM_039104158.2"/>
</dbReference>
<dbReference type="SMR" id="Q99MZ4"/>
<dbReference type="BioGRID" id="250899">
    <property type="interactions" value="1"/>
</dbReference>
<dbReference type="FunCoup" id="Q99MZ4">
    <property type="interactions" value="1130"/>
</dbReference>
<dbReference type="STRING" id="10116.ENSRNOP00000025315"/>
<dbReference type="MEROPS" id="T03.017"/>
<dbReference type="GlyCosmos" id="Q99MZ4">
    <property type="glycosylation" value="9 sites, 8 glycans"/>
</dbReference>
<dbReference type="GlyGen" id="Q99MZ4">
    <property type="glycosylation" value="9 sites, 8 N-linked glycans (2 sites)"/>
</dbReference>
<dbReference type="iPTMnet" id="Q99MZ4"/>
<dbReference type="PhosphoSitePlus" id="Q99MZ4"/>
<dbReference type="SwissPalm" id="Q99MZ4"/>
<dbReference type="jPOST" id="Q99MZ4"/>
<dbReference type="PaxDb" id="10116-ENSRNOP00000025315"/>
<dbReference type="Ensembl" id="ENSRNOT00000025315.6">
    <property type="protein sequence ID" value="ENSRNOP00000025315.3"/>
    <property type="gene ID" value="ENSRNOG00000018441.7"/>
</dbReference>
<dbReference type="GeneID" id="156275"/>
<dbReference type="KEGG" id="rno:156275"/>
<dbReference type="UCSC" id="RGD:619870">
    <property type="organism name" value="rat"/>
</dbReference>
<dbReference type="AGR" id="RGD:619870"/>
<dbReference type="CTD" id="2686"/>
<dbReference type="RGD" id="619870">
    <property type="gene designation" value="Ggt7"/>
</dbReference>
<dbReference type="eggNOG" id="KOG2410">
    <property type="taxonomic scope" value="Eukaryota"/>
</dbReference>
<dbReference type="GeneTree" id="ENSGT00940000156917"/>
<dbReference type="HOGENOM" id="CLU_014813_4_1_1"/>
<dbReference type="InParanoid" id="Q99MZ4"/>
<dbReference type="PhylomeDB" id="Q99MZ4"/>
<dbReference type="TreeFam" id="TF333329"/>
<dbReference type="Reactome" id="R-RNO-174403">
    <property type="pathway name" value="Glutathione synthesis and recycling"/>
</dbReference>
<dbReference type="Reactome" id="R-RNO-5423646">
    <property type="pathway name" value="Aflatoxin activation and detoxification"/>
</dbReference>
<dbReference type="Reactome" id="R-RNO-9753281">
    <property type="pathway name" value="Paracetamol ADME"/>
</dbReference>
<dbReference type="UniPathway" id="UPA00204"/>
<dbReference type="PRO" id="PR:Q99MZ4"/>
<dbReference type="Proteomes" id="UP000002494">
    <property type="component" value="Chromosome 3"/>
</dbReference>
<dbReference type="Bgee" id="ENSRNOG00000018441">
    <property type="expression patterns" value="Expressed in frontal cortex and 18 other cell types or tissues"/>
</dbReference>
<dbReference type="GO" id="GO:0005886">
    <property type="term" value="C:plasma membrane"/>
    <property type="evidence" value="ECO:0000318"/>
    <property type="project" value="GO_Central"/>
</dbReference>
<dbReference type="GO" id="GO:0036374">
    <property type="term" value="F:glutathione hydrolase activity"/>
    <property type="evidence" value="ECO:0000318"/>
    <property type="project" value="GO_Central"/>
</dbReference>
<dbReference type="GO" id="GO:0103068">
    <property type="term" value="F:leukotriene C4 gamma-glutamyl transferase activity"/>
    <property type="evidence" value="ECO:0007669"/>
    <property type="project" value="UniProtKB-EC"/>
</dbReference>
<dbReference type="GO" id="GO:0006750">
    <property type="term" value="P:glutathione biosynthetic process"/>
    <property type="evidence" value="ECO:0007669"/>
    <property type="project" value="UniProtKB-KW"/>
</dbReference>
<dbReference type="GO" id="GO:0006751">
    <property type="term" value="P:glutathione catabolic process"/>
    <property type="evidence" value="ECO:0000318"/>
    <property type="project" value="GO_Central"/>
</dbReference>
<dbReference type="GO" id="GO:1902883">
    <property type="term" value="P:negative regulation of response to oxidative stress"/>
    <property type="evidence" value="ECO:0000266"/>
    <property type="project" value="RGD"/>
</dbReference>
<dbReference type="FunFam" id="3.60.20.40:FF:000002">
    <property type="entry name" value="gamma-glutamyltransferase 7"/>
    <property type="match status" value="1"/>
</dbReference>
<dbReference type="FunFam" id="1.10.246.130:FF:000003">
    <property type="entry name" value="Glutathione hydrolase 7"/>
    <property type="match status" value="1"/>
</dbReference>
<dbReference type="Gene3D" id="1.10.246.130">
    <property type="match status" value="1"/>
</dbReference>
<dbReference type="Gene3D" id="3.60.20.40">
    <property type="match status" value="1"/>
</dbReference>
<dbReference type="InterPro" id="IPR043138">
    <property type="entry name" value="GGT_lsub_C"/>
</dbReference>
<dbReference type="InterPro" id="IPR000101">
    <property type="entry name" value="GGT_peptidase"/>
</dbReference>
<dbReference type="InterPro" id="IPR043137">
    <property type="entry name" value="GGT_ssub"/>
</dbReference>
<dbReference type="InterPro" id="IPR029055">
    <property type="entry name" value="Ntn_hydrolases_N"/>
</dbReference>
<dbReference type="PANTHER" id="PTHR11686">
    <property type="entry name" value="GAMMA GLUTAMYL TRANSPEPTIDASE"/>
    <property type="match status" value="1"/>
</dbReference>
<dbReference type="PANTHER" id="PTHR11686:SF54">
    <property type="entry name" value="GLUTATHIONE HYDROLASE 7"/>
    <property type="match status" value="1"/>
</dbReference>
<dbReference type="Pfam" id="PF01019">
    <property type="entry name" value="G_glu_transpept"/>
    <property type="match status" value="1"/>
</dbReference>
<dbReference type="PRINTS" id="PR01210">
    <property type="entry name" value="GGTRANSPTASE"/>
</dbReference>
<dbReference type="SUPFAM" id="SSF56235">
    <property type="entry name" value="N-terminal nucleophile aminohydrolases (Ntn hydrolases)"/>
    <property type="match status" value="1"/>
</dbReference>
<proteinExistence type="evidence at protein level"/>
<accession>Q99MZ4</accession>
<gene>
    <name evidence="8" type="primary">Ggt7</name>
    <name type="synonym">Ggtl3</name>
</gene>
<feature type="chain" id="PRO_0000011070" description="Glutathione hydrolase 7 heavy chain" evidence="1">
    <location>
        <begin position="1"/>
        <end position="472"/>
    </location>
</feature>
<feature type="chain" id="PRO_0000011071" description="Glutathione hydrolase 7 light chain" evidence="1">
    <location>
        <begin position="473"/>
        <end position="662"/>
    </location>
</feature>
<feature type="topological domain" description="Cytoplasmic" evidence="2">
    <location>
        <begin position="1"/>
        <end position="106"/>
    </location>
</feature>
<feature type="transmembrane region" description="Helical; Signal-anchor for type II membrane protein" evidence="5">
    <location>
        <begin position="107"/>
        <end position="127"/>
    </location>
</feature>
<feature type="topological domain" description="Extracellular" evidence="2">
    <location>
        <begin position="128"/>
        <end position="662"/>
    </location>
</feature>
<feature type="region of interest" description="Disordered" evidence="6">
    <location>
        <begin position="26"/>
        <end position="90"/>
    </location>
</feature>
<feature type="compositionally biased region" description="Low complexity" evidence="6">
    <location>
        <begin position="72"/>
        <end position="83"/>
    </location>
</feature>
<feature type="modified residue" description="Phosphoserine" evidence="9">
    <location>
        <position position="17"/>
    </location>
</feature>
<feature type="modified residue" description="Phosphoserine" evidence="4">
    <location>
        <position position="72"/>
    </location>
</feature>
<feature type="modified residue" description="Phosphoserine" evidence="9">
    <location>
        <position position="79"/>
    </location>
</feature>
<feature type="modified residue" description="Phosphoserine" evidence="9">
    <location>
        <position position="83"/>
    </location>
</feature>
<feature type="glycosylation site" description="N-linked (GlcNAc...) asparagine" evidence="5">
    <location>
        <position position="198"/>
    </location>
</feature>
<feature type="glycosylation site" description="N-linked (GlcNAc...) asparagine" evidence="5">
    <location>
        <position position="267"/>
    </location>
</feature>
<feature type="glycosylation site" description="N-linked (GlcNAc...) asparagine" evidence="5">
    <location>
        <position position="283"/>
    </location>
</feature>
<feature type="glycosylation site" description="N-linked (GlcNAc...) asparagine" evidence="5">
    <location>
        <position position="330"/>
    </location>
</feature>
<feature type="glycosylation site" description="N-linked (GlcNAc...) asparagine" evidence="5">
    <location>
        <position position="353"/>
    </location>
</feature>
<feature type="glycosylation site" description="N-linked (GlcNAc...) asparagine" evidence="5">
    <location>
        <position position="394"/>
    </location>
</feature>
<feature type="glycosylation site" description="N-linked (GlcNAc...) asparagine" evidence="5">
    <location>
        <position position="519"/>
    </location>
</feature>
<feature type="glycosylation site" description="N-linked (GlcNAc...) asparagine" evidence="10">
    <location>
        <position position="523"/>
    </location>
</feature>
<feature type="glycosylation site" description="N-linked (GlcNAc...) asparagine" evidence="10">
    <location>
        <position position="586"/>
    </location>
</feature>
<protein>
    <recommendedName>
        <fullName evidence="7">Glutathione hydrolase 7</fullName>
        <ecNumber evidence="3">3.4.19.13</ecNumber>
    </recommendedName>
    <alternativeName>
        <fullName>Gamma-glutamyltransferase 7</fullName>
        <shortName>GGT 7</shortName>
        <ecNumber evidence="3">2.3.2.2</ecNumber>
    </alternativeName>
    <alternativeName>
        <fullName>Gamma-glutamyltransferase-like 3</fullName>
    </alternativeName>
    <alternativeName>
        <fullName>Gamma-glutamyltranspeptidase 7</fullName>
    </alternativeName>
    <component>
        <recommendedName>
            <fullName>Glutathione hydrolase 7 heavy chain</fullName>
        </recommendedName>
    </component>
    <component>
        <recommendedName>
            <fullName>Glutathione hydrolase 7 light chain</fullName>
        </recommendedName>
    </component>
</protein>
<organism>
    <name type="scientific">Rattus norvegicus</name>
    <name type="common">Rat</name>
    <dbReference type="NCBI Taxonomy" id="10116"/>
    <lineage>
        <taxon>Eukaryota</taxon>
        <taxon>Metazoa</taxon>
        <taxon>Chordata</taxon>
        <taxon>Craniata</taxon>
        <taxon>Vertebrata</taxon>
        <taxon>Euteleostomi</taxon>
        <taxon>Mammalia</taxon>
        <taxon>Eutheria</taxon>
        <taxon>Euarchontoglires</taxon>
        <taxon>Glires</taxon>
        <taxon>Rodentia</taxon>
        <taxon>Myomorpha</taxon>
        <taxon>Muroidea</taxon>
        <taxon>Muridae</taxon>
        <taxon>Murinae</taxon>
        <taxon>Rattus</taxon>
    </lineage>
</organism>
<name>GGT7_RAT</name>
<evidence type="ECO:0000250" key="1"/>
<evidence type="ECO:0000250" key="2">
    <source>
        <dbReference type="UniProtKB" id="P07314"/>
    </source>
</evidence>
<evidence type="ECO:0000250" key="3">
    <source>
        <dbReference type="UniProtKB" id="P19440"/>
    </source>
</evidence>
<evidence type="ECO:0000250" key="4">
    <source>
        <dbReference type="UniProtKB" id="Q9UJ14"/>
    </source>
</evidence>
<evidence type="ECO:0000255" key="5"/>
<evidence type="ECO:0000256" key="6">
    <source>
        <dbReference type="SAM" id="MobiDB-lite"/>
    </source>
</evidence>
<evidence type="ECO:0000305" key="7"/>
<evidence type="ECO:0000312" key="8">
    <source>
        <dbReference type="RGD" id="619870"/>
    </source>
</evidence>
<evidence type="ECO:0007744" key="9">
    <source>
    </source>
</evidence>
<evidence type="ECO:0007744" key="10">
    <source>
    </source>
</evidence>